<reference key="1">
    <citation type="journal article" date="2000" name="Nature">
        <title>Sequence and analysis of chromosome 1 of the plant Arabidopsis thaliana.</title>
        <authorList>
            <person name="Theologis A."/>
            <person name="Ecker J.R."/>
            <person name="Palm C.J."/>
            <person name="Federspiel N.A."/>
            <person name="Kaul S."/>
            <person name="White O."/>
            <person name="Alonso J."/>
            <person name="Altafi H."/>
            <person name="Araujo R."/>
            <person name="Bowman C.L."/>
            <person name="Brooks S.Y."/>
            <person name="Buehler E."/>
            <person name="Chan A."/>
            <person name="Chao Q."/>
            <person name="Chen H."/>
            <person name="Cheuk R.F."/>
            <person name="Chin C.W."/>
            <person name="Chung M.K."/>
            <person name="Conn L."/>
            <person name="Conway A.B."/>
            <person name="Conway A.R."/>
            <person name="Creasy T.H."/>
            <person name="Dewar K."/>
            <person name="Dunn P."/>
            <person name="Etgu P."/>
            <person name="Feldblyum T.V."/>
            <person name="Feng J.-D."/>
            <person name="Fong B."/>
            <person name="Fujii C.Y."/>
            <person name="Gill J.E."/>
            <person name="Goldsmith A.D."/>
            <person name="Haas B."/>
            <person name="Hansen N.F."/>
            <person name="Hughes B."/>
            <person name="Huizar L."/>
            <person name="Hunter J.L."/>
            <person name="Jenkins J."/>
            <person name="Johnson-Hopson C."/>
            <person name="Khan S."/>
            <person name="Khaykin E."/>
            <person name="Kim C.J."/>
            <person name="Koo H.L."/>
            <person name="Kremenetskaia I."/>
            <person name="Kurtz D.B."/>
            <person name="Kwan A."/>
            <person name="Lam B."/>
            <person name="Langin-Hooper S."/>
            <person name="Lee A."/>
            <person name="Lee J.M."/>
            <person name="Lenz C.A."/>
            <person name="Li J.H."/>
            <person name="Li Y.-P."/>
            <person name="Lin X."/>
            <person name="Liu S.X."/>
            <person name="Liu Z.A."/>
            <person name="Luros J.S."/>
            <person name="Maiti R."/>
            <person name="Marziali A."/>
            <person name="Militscher J."/>
            <person name="Miranda M."/>
            <person name="Nguyen M."/>
            <person name="Nierman W.C."/>
            <person name="Osborne B.I."/>
            <person name="Pai G."/>
            <person name="Peterson J."/>
            <person name="Pham P.K."/>
            <person name="Rizzo M."/>
            <person name="Rooney T."/>
            <person name="Rowley D."/>
            <person name="Sakano H."/>
            <person name="Salzberg S.L."/>
            <person name="Schwartz J.R."/>
            <person name="Shinn P."/>
            <person name="Southwick A.M."/>
            <person name="Sun H."/>
            <person name="Tallon L.J."/>
            <person name="Tambunga G."/>
            <person name="Toriumi M.J."/>
            <person name="Town C.D."/>
            <person name="Utterback T."/>
            <person name="Van Aken S."/>
            <person name="Vaysberg M."/>
            <person name="Vysotskaia V.S."/>
            <person name="Walker M."/>
            <person name="Wu D."/>
            <person name="Yu G."/>
            <person name="Fraser C.M."/>
            <person name="Venter J.C."/>
            <person name="Davis R.W."/>
        </authorList>
    </citation>
    <scope>NUCLEOTIDE SEQUENCE [LARGE SCALE GENOMIC DNA]</scope>
    <source>
        <strain>cv. Columbia</strain>
    </source>
</reference>
<reference key="2">
    <citation type="journal article" date="2017" name="Plant J.">
        <title>Araport11: a complete reannotation of the Arabidopsis thaliana reference genome.</title>
        <authorList>
            <person name="Cheng C.Y."/>
            <person name="Krishnakumar V."/>
            <person name="Chan A.P."/>
            <person name="Thibaud-Nissen F."/>
            <person name="Schobel S."/>
            <person name="Town C.D."/>
        </authorList>
    </citation>
    <scope>GENOME REANNOTATION</scope>
    <source>
        <strain>cv. Columbia</strain>
    </source>
</reference>
<reference key="3">
    <citation type="journal article" date="2003" name="Science">
        <title>Empirical analysis of transcriptional activity in the Arabidopsis genome.</title>
        <authorList>
            <person name="Yamada K."/>
            <person name="Lim J."/>
            <person name="Dale J.M."/>
            <person name="Chen H."/>
            <person name="Shinn P."/>
            <person name="Palm C.J."/>
            <person name="Southwick A.M."/>
            <person name="Wu H.C."/>
            <person name="Kim C.J."/>
            <person name="Nguyen M."/>
            <person name="Pham P.K."/>
            <person name="Cheuk R.F."/>
            <person name="Karlin-Newmann G."/>
            <person name="Liu S.X."/>
            <person name="Lam B."/>
            <person name="Sakano H."/>
            <person name="Wu T."/>
            <person name="Yu G."/>
            <person name="Miranda M."/>
            <person name="Quach H.L."/>
            <person name="Tripp M."/>
            <person name="Chang C.H."/>
            <person name="Lee J.M."/>
            <person name="Toriumi M.J."/>
            <person name="Chan M.M."/>
            <person name="Tang C.C."/>
            <person name="Onodera C.S."/>
            <person name="Deng J.M."/>
            <person name="Akiyama K."/>
            <person name="Ansari Y."/>
            <person name="Arakawa T."/>
            <person name="Banh J."/>
            <person name="Banno F."/>
            <person name="Bowser L."/>
            <person name="Brooks S.Y."/>
            <person name="Carninci P."/>
            <person name="Chao Q."/>
            <person name="Choy N."/>
            <person name="Enju A."/>
            <person name="Goldsmith A.D."/>
            <person name="Gurjal M."/>
            <person name="Hansen N.F."/>
            <person name="Hayashizaki Y."/>
            <person name="Johnson-Hopson C."/>
            <person name="Hsuan V.W."/>
            <person name="Iida K."/>
            <person name="Karnes M."/>
            <person name="Khan S."/>
            <person name="Koesema E."/>
            <person name="Ishida J."/>
            <person name="Jiang P.X."/>
            <person name="Jones T."/>
            <person name="Kawai J."/>
            <person name="Kamiya A."/>
            <person name="Meyers C."/>
            <person name="Nakajima M."/>
            <person name="Narusaka M."/>
            <person name="Seki M."/>
            <person name="Sakurai T."/>
            <person name="Satou M."/>
            <person name="Tamse R."/>
            <person name="Vaysberg M."/>
            <person name="Wallender E.K."/>
            <person name="Wong C."/>
            <person name="Yamamura Y."/>
            <person name="Yuan S."/>
            <person name="Shinozaki K."/>
            <person name="Davis R.W."/>
            <person name="Theologis A."/>
            <person name="Ecker J.R."/>
        </authorList>
    </citation>
    <scope>NUCLEOTIDE SEQUENCE [LARGE SCALE MRNA]</scope>
    <source>
        <strain>cv. Columbia</strain>
    </source>
</reference>
<reference key="4">
    <citation type="submission" date="2006-02" db="EMBL/GenBank/DDBJ databases">
        <title>Arabidopsis ORF clones.</title>
        <authorList>
            <person name="Kim C.J."/>
            <person name="Chen H."/>
            <person name="Shinn P."/>
            <person name="Ecker J.R."/>
        </authorList>
    </citation>
    <scope>NUCLEOTIDE SEQUENCE [LARGE SCALE MRNA]</scope>
    <source>
        <strain>cv. Columbia</strain>
    </source>
</reference>
<reference key="5">
    <citation type="submission" date="2002-03" db="EMBL/GenBank/DDBJ databases">
        <title>Full-length cDNA from Arabidopsis thaliana.</title>
        <authorList>
            <person name="Brover V.V."/>
            <person name="Troukhan M.E."/>
            <person name="Alexandrov N.A."/>
            <person name="Lu Y.-P."/>
            <person name="Flavell R.B."/>
            <person name="Feldmann K.A."/>
        </authorList>
    </citation>
    <scope>NUCLEOTIDE SEQUENCE [LARGE SCALE MRNA]</scope>
</reference>
<reference key="6">
    <citation type="journal article" date="2006" name="Plant Physiol.">
        <title>Genome-wide analysis of the ERF gene family in Arabidopsis and rice.</title>
        <authorList>
            <person name="Nakano T."/>
            <person name="Suzuki K."/>
            <person name="Fujimura T."/>
            <person name="Shinshi H."/>
        </authorList>
    </citation>
    <scope>GENE FAMILY</scope>
    <scope>NOMENCLATURE</scope>
</reference>
<organism>
    <name type="scientific">Arabidopsis thaliana</name>
    <name type="common">Mouse-ear cress</name>
    <dbReference type="NCBI Taxonomy" id="3702"/>
    <lineage>
        <taxon>Eukaryota</taxon>
        <taxon>Viridiplantae</taxon>
        <taxon>Streptophyta</taxon>
        <taxon>Embryophyta</taxon>
        <taxon>Tracheophyta</taxon>
        <taxon>Spermatophyta</taxon>
        <taxon>Magnoliopsida</taxon>
        <taxon>eudicotyledons</taxon>
        <taxon>Gunneridae</taxon>
        <taxon>Pentapetalae</taxon>
        <taxon>rosids</taxon>
        <taxon>malvids</taxon>
        <taxon>Brassicales</taxon>
        <taxon>Brassicaceae</taxon>
        <taxon>Camelineae</taxon>
        <taxon>Arabidopsis</taxon>
    </lineage>
</organism>
<proteinExistence type="evidence at transcript level"/>
<protein>
    <recommendedName>
        <fullName>Ethylene-responsive transcription factor ERF019</fullName>
    </recommendedName>
</protein>
<evidence type="ECO:0000250" key="1"/>
<evidence type="ECO:0000255" key="2">
    <source>
        <dbReference type="PROSITE-ProRule" id="PRU00366"/>
    </source>
</evidence>
<evidence type="ECO:0000305" key="3"/>
<gene>
    <name type="primary">ERF019</name>
    <name type="ordered locus">At1g22810</name>
    <name type="ORF">T22J18.2</name>
</gene>
<comment type="function">
    <text evidence="1">Probably acts as a transcriptional activator. Binds to the GCC-box pathogenesis-related promoter element. May be involved in the regulation of gene expression by stress factors and by components of stress signal transduction pathways (By similarity).</text>
</comment>
<comment type="subcellular location">
    <subcellularLocation>
        <location evidence="3">Nucleus</location>
    </subcellularLocation>
</comment>
<comment type="similarity">
    <text evidence="3">Belongs to the AP2/ERF transcription factor family. ERF subfamily.</text>
</comment>
<name>ERF19_ARATH</name>
<feature type="chain" id="PRO_0000290379" description="Ethylene-responsive transcription factor ERF019">
    <location>
        <begin position="1"/>
        <end position="144"/>
    </location>
</feature>
<feature type="DNA-binding region" description="AP2/ERF" evidence="2">
    <location>
        <begin position="13"/>
        <end position="72"/>
    </location>
</feature>
<accession>O80542</accession>
<keyword id="KW-0010">Activator</keyword>
<keyword id="KW-0238">DNA-binding</keyword>
<keyword id="KW-0936">Ethylene signaling pathway</keyword>
<keyword id="KW-0539">Nucleus</keyword>
<keyword id="KW-1185">Reference proteome</keyword>
<keyword id="KW-0804">Transcription</keyword>
<keyword id="KW-0805">Transcription regulation</keyword>
<dbReference type="EMBL" id="AC003979">
    <property type="protein sequence ID" value="AAC25505.1"/>
    <property type="molecule type" value="Genomic_DNA"/>
</dbReference>
<dbReference type="EMBL" id="CP002684">
    <property type="protein sequence ID" value="AEE30291.1"/>
    <property type="molecule type" value="Genomic_DNA"/>
</dbReference>
<dbReference type="EMBL" id="AF325106">
    <property type="protein sequence ID" value="AAK17174.1"/>
    <property type="molecule type" value="mRNA"/>
</dbReference>
<dbReference type="EMBL" id="BT024683">
    <property type="protein sequence ID" value="ABD57508.1"/>
    <property type="molecule type" value="mRNA"/>
</dbReference>
<dbReference type="EMBL" id="AY086697">
    <property type="protein sequence ID" value="AAM63751.1"/>
    <property type="molecule type" value="mRNA"/>
</dbReference>
<dbReference type="PIR" id="T00763">
    <property type="entry name" value="T00763"/>
</dbReference>
<dbReference type="RefSeq" id="NP_173695.1">
    <property type="nucleotide sequence ID" value="NM_102128.3"/>
</dbReference>
<dbReference type="SMR" id="O80542"/>
<dbReference type="BioGRID" id="24126">
    <property type="interactions" value="10"/>
</dbReference>
<dbReference type="FunCoup" id="O80542">
    <property type="interactions" value="27"/>
</dbReference>
<dbReference type="IntAct" id="O80542">
    <property type="interactions" value="10"/>
</dbReference>
<dbReference type="STRING" id="3702.O80542"/>
<dbReference type="PaxDb" id="3702-AT1G22810.1"/>
<dbReference type="EnsemblPlants" id="AT1G22810.1">
    <property type="protein sequence ID" value="AT1G22810.1"/>
    <property type="gene ID" value="AT1G22810"/>
</dbReference>
<dbReference type="GeneID" id="838887"/>
<dbReference type="Gramene" id="AT1G22810.1">
    <property type="protein sequence ID" value="AT1G22810.1"/>
    <property type="gene ID" value="AT1G22810"/>
</dbReference>
<dbReference type="KEGG" id="ath:AT1G22810"/>
<dbReference type="Araport" id="AT1G22810"/>
<dbReference type="TAIR" id="AT1G22810">
    <property type="gene designation" value="ATERF019"/>
</dbReference>
<dbReference type="eggNOG" id="ENOG502S3U7">
    <property type="taxonomic scope" value="Eukaryota"/>
</dbReference>
<dbReference type="HOGENOM" id="CLU_063331_7_4_1"/>
<dbReference type="InParanoid" id="O80542"/>
<dbReference type="OMA" id="PRQHYAE"/>
<dbReference type="OrthoDB" id="1849108at2759"/>
<dbReference type="PhylomeDB" id="O80542"/>
<dbReference type="PRO" id="PR:O80542"/>
<dbReference type="Proteomes" id="UP000006548">
    <property type="component" value="Chromosome 1"/>
</dbReference>
<dbReference type="ExpressionAtlas" id="O80542">
    <property type="expression patterns" value="baseline and differential"/>
</dbReference>
<dbReference type="GO" id="GO:0005737">
    <property type="term" value="C:cytoplasm"/>
    <property type="evidence" value="ECO:0000314"/>
    <property type="project" value="TAIR"/>
</dbReference>
<dbReference type="GO" id="GO:0005634">
    <property type="term" value="C:nucleus"/>
    <property type="evidence" value="ECO:0000314"/>
    <property type="project" value="TAIR"/>
</dbReference>
<dbReference type="GO" id="GO:0003700">
    <property type="term" value="F:DNA-binding transcription factor activity"/>
    <property type="evidence" value="ECO:0000250"/>
    <property type="project" value="TAIR"/>
</dbReference>
<dbReference type="GO" id="GO:0000976">
    <property type="term" value="F:transcription cis-regulatory region binding"/>
    <property type="evidence" value="ECO:0000353"/>
    <property type="project" value="TAIR"/>
</dbReference>
<dbReference type="GO" id="GO:0042631">
    <property type="term" value="P:cellular response to water deprivation"/>
    <property type="evidence" value="ECO:0000315"/>
    <property type="project" value="TAIR"/>
</dbReference>
<dbReference type="GO" id="GO:0009873">
    <property type="term" value="P:ethylene-activated signaling pathway"/>
    <property type="evidence" value="ECO:0007669"/>
    <property type="project" value="UniProtKB-KW"/>
</dbReference>
<dbReference type="GO" id="GO:0009620">
    <property type="term" value="P:response to fungus"/>
    <property type="evidence" value="ECO:0000270"/>
    <property type="project" value="TAIR"/>
</dbReference>
<dbReference type="CDD" id="cd00018">
    <property type="entry name" value="AP2"/>
    <property type="match status" value="1"/>
</dbReference>
<dbReference type="FunFam" id="3.30.730.10:FF:000006">
    <property type="entry name" value="ethylene-responsive transcription factor ERF014-like"/>
    <property type="match status" value="1"/>
</dbReference>
<dbReference type="Gene3D" id="3.30.730.10">
    <property type="entry name" value="AP2/ERF domain"/>
    <property type="match status" value="1"/>
</dbReference>
<dbReference type="InterPro" id="IPR001471">
    <property type="entry name" value="AP2/ERF_dom"/>
</dbReference>
<dbReference type="InterPro" id="IPR036955">
    <property type="entry name" value="AP2/ERF_dom_sf"/>
</dbReference>
<dbReference type="InterPro" id="IPR051032">
    <property type="entry name" value="AP2/ERF_TF_ERF_subfamily"/>
</dbReference>
<dbReference type="InterPro" id="IPR016177">
    <property type="entry name" value="DNA-bd_dom_sf"/>
</dbReference>
<dbReference type="PANTHER" id="PTHR31985:SF200">
    <property type="entry name" value="ETHYLENE-RESPONSIVE TRANSCRIPTION FACTOR ERF019"/>
    <property type="match status" value="1"/>
</dbReference>
<dbReference type="PANTHER" id="PTHR31985">
    <property type="entry name" value="ETHYLENE-RESPONSIVE TRANSCRIPTION FACTOR ERF042-RELATED"/>
    <property type="match status" value="1"/>
</dbReference>
<dbReference type="Pfam" id="PF00847">
    <property type="entry name" value="AP2"/>
    <property type="match status" value="1"/>
</dbReference>
<dbReference type="PRINTS" id="PR00367">
    <property type="entry name" value="ETHRSPELEMNT"/>
</dbReference>
<dbReference type="SMART" id="SM00380">
    <property type="entry name" value="AP2"/>
    <property type="match status" value="1"/>
</dbReference>
<dbReference type="SUPFAM" id="SSF54171">
    <property type="entry name" value="DNA-binding domain"/>
    <property type="match status" value="1"/>
</dbReference>
<dbReference type="PROSITE" id="PS51032">
    <property type="entry name" value="AP2_ERF"/>
    <property type="match status" value="1"/>
</dbReference>
<sequence length="144" mass="15816">MDYRESTGESQSKYKGIRRRKWGKWVSEIRVPGTRDRLWLGSFSTAEGAAVAHDVAFFCLHQPDSLESLNFPHLLNPSLVSRTSPRSIQQAASNAGMAIDAGIVHSTSVNSGCGDTTTYYENGADQVEPLNISVYDYLGGHDHV</sequence>